<organism>
    <name type="scientific">Ruminiclostridium cellulolyticum (strain ATCC 35319 / DSM 5812 / JCM 6584 / H10)</name>
    <name type="common">Clostridium cellulolyticum</name>
    <dbReference type="NCBI Taxonomy" id="394503"/>
    <lineage>
        <taxon>Bacteria</taxon>
        <taxon>Bacillati</taxon>
        <taxon>Bacillota</taxon>
        <taxon>Clostridia</taxon>
        <taxon>Eubacteriales</taxon>
        <taxon>Oscillospiraceae</taxon>
        <taxon>Ruminiclostridium</taxon>
    </lineage>
</organism>
<evidence type="ECO:0000255" key="1">
    <source>
        <dbReference type="HAMAP-Rule" id="MF_00001"/>
    </source>
</evidence>
<keyword id="KW-0665">Pyrimidine biosynthesis</keyword>
<keyword id="KW-1185">Reference proteome</keyword>
<keyword id="KW-0808">Transferase</keyword>
<comment type="function">
    <text evidence="1">Catalyzes the condensation of carbamoyl phosphate and aspartate to form carbamoyl aspartate and inorganic phosphate, the committed step in the de novo pyrimidine nucleotide biosynthesis pathway.</text>
</comment>
<comment type="catalytic activity">
    <reaction evidence="1">
        <text>carbamoyl phosphate + L-aspartate = N-carbamoyl-L-aspartate + phosphate + H(+)</text>
        <dbReference type="Rhea" id="RHEA:20013"/>
        <dbReference type="ChEBI" id="CHEBI:15378"/>
        <dbReference type="ChEBI" id="CHEBI:29991"/>
        <dbReference type="ChEBI" id="CHEBI:32814"/>
        <dbReference type="ChEBI" id="CHEBI:43474"/>
        <dbReference type="ChEBI" id="CHEBI:58228"/>
        <dbReference type="EC" id="2.1.3.2"/>
    </reaction>
</comment>
<comment type="pathway">
    <text evidence="1">Pyrimidine metabolism; UMP biosynthesis via de novo pathway; (S)-dihydroorotate from bicarbonate: step 2/3.</text>
</comment>
<comment type="subunit">
    <text evidence="1">Heterododecamer (2C3:3R2) of six catalytic PyrB chains organized as two trimers (C3), and six regulatory PyrI chains organized as three dimers (R2).</text>
</comment>
<comment type="similarity">
    <text evidence="1">Belongs to the aspartate/ornithine carbamoyltransferase superfamily. ATCase family.</text>
</comment>
<gene>
    <name evidence="1" type="primary">pyrB</name>
    <name type="ordered locus">Ccel_0612</name>
</gene>
<reference key="1">
    <citation type="submission" date="2009-01" db="EMBL/GenBank/DDBJ databases">
        <title>Complete sequence of Clostridium cellulolyticum H10.</title>
        <authorList>
            <consortium name="US DOE Joint Genome Institute"/>
            <person name="Lucas S."/>
            <person name="Copeland A."/>
            <person name="Lapidus A."/>
            <person name="Glavina del Rio T."/>
            <person name="Dalin E."/>
            <person name="Tice H."/>
            <person name="Bruce D."/>
            <person name="Goodwin L."/>
            <person name="Pitluck S."/>
            <person name="Chertkov O."/>
            <person name="Saunders E."/>
            <person name="Brettin T."/>
            <person name="Detter J.C."/>
            <person name="Han C."/>
            <person name="Larimer F."/>
            <person name="Land M."/>
            <person name="Hauser L."/>
            <person name="Kyrpides N."/>
            <person name="Ivanova N."/>
            <person name="Zhou J."/>
            <person name="Richardson P."/>
        </authorList>
    </citation>
    <scope>NUCLEOTIDE SEQUENCE [LARGE SCALE GENOMIC DNA]</scope>
    <source>
        <strain>ATCC 35319 / DSM 5812 / JCM 6584 / H10</strain>
    </source>
</reference>
<dbReference type="EC" id="2.1.3.2" evidence="1"/>
<dbReference type="EMBL" id="CP001348">
    <property type="protein sequence ID" value="ACL74993.1"/>
    <property type="molecule type" value="Genomic_DNA"/>
</dbReference>
<dbReference type="RefSeq" id="WP_015924162.1">
    <property type="nucleotide sequence ID" value="NC_011898.1"/>
</dbReference>
<dbReference type="SMR" id="B8I769"/>
<dbReference type="STRING" id="394503.Ccel_0612"/>
<dbReference type="KEGG" id="cce:Ccel_0612"/>
<dbReference type="eggNOG" id="COG0540">
    <property type="taxonomic scope" value="Bacteria"/>
</dbReference>
<dbReference type="HOGENOM" id="CLU_043846_2_0_9"/>
<dbReference type="OrthoDB" id="9802587at2"/>
<dbReference type="UniPathway" id="UPA00070">
    <property type="reaction ID" value="UER00116"/>
</dbReference>
<dbReference type="Proteomes" id="UP000001349">
    <property type="component" value="Chromosome"/>
</dbReference>
<dbReference type="GO" id="GO:0005829">
    <property type="term" value="C:cytosol"/>
    <property type="evidence" value="ECO:0007669"/>
    <property type="project" value="TreeGrafter"/>
</dbReference>
<dbReference type="GO" id="GO:0016597">
    <property type="term" value="F:amino acid binding"/>
    <property type="evidence" value="ECO:0007669"/>
    <property type="project" value="InterPro"/>
</dbReference>
<dbReference type="GO" id="GO:0004070">
    <property type="term" value="F:aspartate carbamoyltransferase activity"/>
    <property type="evidence" value="ECO:0007669"/>
    <property type="project" value="UniProtKB-UniRule"/>
</dbReference>
<dbReference type="GO" id="GO:0006207">
    <property type="term" value="P:'de novo' pyrimidine nucleobase biosynthetic process"/>
    <property type="evidence" value="ECO:0007669"/>
    <property type="project" value="InterPro"/>
</dbReference>
<dbReference type="GO" id="GO:0044205">
    <property type="term" value="P:'de novo' UMP biosynthetic process"/>
    <property type="evidence" value="ECO:0007669"/>
    <property type="project" value="UniProtKB-UniRule"/>
</dbReference>
<dbReference type="GO" id="GO:0006520">
    <property type="term" value="P:amino acid metabolic process"/>
    <property type="evidence" value="ECO:0007669"/>
    <property type="project" value="InterPro"/>
</dbReference>
<dbReference type="FunFam" id="3.40.50.1370:FF:000007">
    <property type="entry name" value="Aspartate carbamoyltransferase"/>
    <property type="match status" value="1"/>
</dbReference>
<dbReference type="Gene3D" id="3.40.50.1370">
    <property type="entry name" value="Aspartate/ornithine carbamoyltransferase"/>
    <property type="match status" value="2"/>
</dbReference>
<dbReference type="HAMAP" id="MF_00001">
    <property type="entry name" value="Asp_carb_tr"/>
    <property type="match status" value="1"/>
</dbReference>
<dbReference type="InterPro" id="IPR006132">
    <property type="entry name" value="Asp/Orn_carbamoyltranf_P-bd"/>
</dbReference>
<dbReference type="InterPro" id="IPR006130">
    <property type="entry name" value="Asp/Orn_carbamoylTrfase"/>
</dbReference>
<dbReference type="InterPro" id="IPR036901">
    <property type="entry name" value="Asp/Orn_carbamoylTrfase_sf"/>
</dbReference>
<dbReference type="InterPro" id="IPR002082">
    <property type="entry name" value="Asp_carbamoyltransf"/>
</dbReference>
<dbReference type="InterPro" id="IPR006131">
    <property type="entry name" value="Asp_carbamoyltransf_Asp/Orn-bd"/>
</dbReference>
<dbReference type="NCBIfam" id="TIGR00670">
    <property type="entry name" value="asp_carb_tr"/>
    <property type="match status" value="1"/>
</dbReference>
<dbReference type="NCBIfam" id="NF002032">
    <property type="entry name" value="PRK00856.1"/>
    <property type="match status" value="1"/>
</dbReference>
<dbReference type="PANTHER" id="PTHR45753:SF6">
    <property type="entry name" value="ASPARTATE CARBAMOYLTRANSFERASE"/>
    <property type="match status" value="1"/>
</dbReference>
<dbReference type="PANTHER" id="PTHR45753">
    <property type="entry name" value="ORNITHINE CARBAMOYLTRANSFERASE, MITOCHONDRIAL"/>
    <property type="match status" value="1"/>
</dbReference>
<dbReference type="Pfam" id="PF00185">
    <property type="entry name" value="OTCace"/>
    <property type="match status" value="1"/>
</dbReference>
<dbReference type="Pfam" id="PF02729">
    <property type="entry name" value="OTCace_N"/>
    <property type="match status" value="1"/>
</dbReference>
<dbReference type="PRINTS" id="PR00100">
    <property type="entry name" value="AOTCASE"/>
</dbReference>
<dbReference type="PRINTS" id="PR00101">
    <property type="entry name" value="ATCASE"/>
</dbReference>
<dbReference type="SUPFAM" id="SSF53671">
    <property type="entry name" value="Aspartate/ornithine carbamoyltransferase"/>
    <property type="match status" value="1"/>
</dbReference>
<dbReference type="PROSITE" id="PS00097">
    <property type="entry name" value="CARBAMOYLTRANSFERASE"/>
    <property type="match status" value="1"/>
</dbReference>
<accession>B8I769</accession>
<proteinExistence type="inferred from homology"/>
<name>PYRB_RUMCH</name>
<protein>
    <recommendedName>
        <fullName evidence="1">Aspartate carbamoyltransferase catalytic subunit</fullName>
        <ecNumber evidence="1">2.1.3.2</ecNumber>
    </recommendedName>
    <alternativeName>
        <fullName evidence="1">Aspartate transcarbamylase</fullName>
        <shortName evidence="1">ATCase</shortName>
    </alternativeName>
</protein>
<sequence>MNLKSKDLLGLRDISAEEIEYILNTAKTMKCIVTSNNKKTAHLQGKSIITLFYENSTRTRLSFELASKYMGASAANISASSSSVQKGETLIDTGKTIDSMGSDIIIMRHPMSGAPHLLAKNVKSSVINAGDGMNEHPTQALLDMFTILEKKGTLKGLKVAIIGDILHSRVARSNIWGLTKMGAEVNVAGPATLIPPEIEKIGVNVFSTVQEAMLDADVVMGLRIQLERQKKGLFPTIREYSRFFGVDDKRLKLAKEDAIVLHPGPVNRGVELSSSVTDGEQSFIDEQVTNGVAVRMALLYLLTRRGIVNEVTD</sequence>
<feature type="chain" id="PRO_1000116134" description="Aspartate carbamoyltransferase catalytic subunit">
    <location>
        <begin position="1"/>
        <end position="313"/>
    </location>
</feature>
<feature type="binding site" evidence="1">
    <location>
        <position position="58"/>
    </location>
    <ligand>
        <name>carbamoyl phosphate</name>
        <dbReference type="ChEBI" id="CHEBI:58228"/>
    </ligand>
</feature>
<feature type="binding site" evidence="1">
    <location>
        <position position="59"/>
    </location>
    <ligand>
        <name>carbamoyl phosphate</name>
        <dbReference type="ChEBI" id="CHEBI:58228"/>
    </ligand>
</feature>
<feature type="binding site" evidence="1">
    <location>
        <position position="86"/>
    </location>
    <ligand>
        <name>L-aspartate</name>
        <dbReference type="ChEBI" id="CHEBI:29991"/>
    </ligand>
</feature>
<feature type="binding site" evidence="1">
    <location>
        <position position="108"/>
    </location>
    <ligand>
        <name>carbamoyl phosphate</name>
        <dbReference type="ChEBI" id="CHEBI:58228"/>
    </ligand>
</feature>
<feature type="binding site" evidence="1">
    <location>
        <position position="136"/>
    </location>
    <ligand>
        <name>carbamoyl phosphate</name>
        <dbReference type="ChEBI" id="CHEBI:58228"/>
    </ligand>
</feature>
<feature type="binding site" evidence="1">
    <location>
        <position position="139"/>
    </location>
    <ligand>
        <name>carbamoyl phosphate</name>
        <dbReference type="ChEBI" id="CHEBI:58228"/>
    </ligand>
</feature>
<feature type="binding site" evidence="1">
    <location>
        <position position="169"/>
    </location>
    <ligand>
        <name>L-aspartate</name>
        <dbReference type="ChEBI" id="CHEBI:29991"/>
    </ligand>
</feature>
<feature type="binding site" evidence="1">
    <location>
        <position position="223"/>
    </location>
    <ligand>
        <name>L-aspartate</name>
        <dbReference type="ChEBI" id="CHEBI:29991"/>
    </ligand>
</feature>
<feature type="binding site" evidence="1">
    <location>
        <position position="264"/>
    </location>
    <ligand>
        <name>carbamoyl phosphate</name>
        <dbReference type="ChEBI" id="CHEBI:58228"/>
    </ligand>
</feature>
<feature type="binding site" evidence="1">
    <location>
        <position position="265"/>
    </location>
    <ligand>
        <name>carbamoyl phosphate</name>
        <dbReference type="ChEBI" id="CHEBI:58228"/>
    </ligand>
</feature>